<keyword id="KW-0067">ATP-binding</keyword>
<keyword id="KW-0963">Cytoplasm</keyword>
<keyword id="KW-0276">Fatty acid metabolism</keyword>
<keyword id="KW-0436">Ligase</keyword>
<keyword id="KW-0443">Lipid metabolism</keyword>
<keyword id="KW-0460">Magnesium</keyword>
<keyword id="KW-0479">Metal-binding</keyword>
<keyword id="KW-0547">Nucleotide-binding</keyword>
<keyword id="KW-0614">Plasmid</keyword>
<reference key="1">
    <citation type="journal article" date="1992" name="Mol. Microbiol.">
        <title>DNA sequence determination and functional characterization of the OCT-plasmid-encoded alkJKL genes of Pseudomonas oleovorans.</title>
        <authorList>
            <person name="van Beilen J.B."/>
            <person name="Eggink G."/>
            <person name="Enequist H."/>
            <person name="Bos R."/>
            <person name="Witholt B."/>
        </authorList>
    </citation>
    <scope>NUCLEOTIDE SEQUENCE [GENOMIC DNA]</scope>
    <scope>CATALYTIC ACTIVITY</scope>
    <scope>PATHWAY</scope>
    <scope>SUBCELLULAR LOCATION</scope>
    <source>
        <strain>GPo1</strain>
    </source>
</reference>
<comment type="catalytic activity">
    <reaction evidence="2">
        <text>a medium-chain fatty acid + ATP + CoA = a medium-chain fatty acyl-CoA + AMP + diphosphate</text>
        <dbReference type="Rhea" id="RHEA:48340"/>
        <dbReference type="ChEBI" id="CHEBI:30616"/>
        <dbReference type="ChEBI" id="CHEBI:33019"/>
        <dbReference type="ChEBI" id="CHEBI:57287"/>
        <dbReference type="ChEBI" id="CHEBI:59558"/>
        <dbReference type="ChEBI" id="CHEBI:90546"/>
        <dbReference type="ChEBI" id="CHEBI:456215"/>
        <dbReference type="EC" id="6.2.1.2"/>
    </reaction>
</comment>
<comment type="pathway">
    <text evidence="2">Lipid metabolism; fatty acid metabolism.</text>
</comment>
<comment type="subcellular location">
    <subcellularLocation>
        <location evidence="2">Cytoplasm</location>
    </subcellularLocation>
</comment>
<comment type="similarity">
    <text evidence="4">Belongs to the ATP-dependent AMP-binding enzyme family.</text>
</comment>
<evidence type="ECO:0000250" key="1"/>
<evidence type="ECO:0000269" key="2">
    <source>
    </source>
</evidence>
<evidence type="ECO:0000303" key="3">
    <source>
    </source>
</evidence>
<evidence type="ECO:0000305" key="4"/>
<organism>
    <name type="scientific">Ectopseudomonas oleovorans</name>
    <name type="common">Pseudomonas oleovorans</name>
    <dbReference type="NCBI Taxonomy" id="301"/>
    <lineage>
        <taxon>Bacteria</taxon>
        <taxon>Pseudomonadati</taxon>
        <taxon>Pseudomonadota</taxon>
        <taxon>Gammaproteobacteria</taxon>
        <taxon>Pseudomonadales</taxon>
        <taxon>Pseudomonadaceae</taxon>
        <taxon>Ectopseudomonas</taxon>
    </lineage>
</organism>
<name>ALKK_ECTOL</name>
<protein>
    <recommendedName>
        <fullName>Medium-chain-fatty-acid--CoA ligase</fullName>
        <ecNumber evidence="2">6.2.1.2</ecNumber>
    </recommendedName>
    <alternativeName>
        <fullName>Medium-chain acyl-CoA synthetase</fullName>
    </alternativeName>
</protein>
<sequence length="546" mass="59262">MLGQMMRNQLVIGSLVEHAARYHGAREVVSVETSGEVTRSCWKEVELRARKLASALGKMGLTPSDRCATIAWNNIRHLEVYYAVSGAGMVCHTINPRLFIEQITYVINHAEDKVVLLDDTFLPIIAEIHGSLPKVKAFVLMAHNNSNASAQMPGLIAYEDLIGQGDDNYIWPDVDENEASSLCYTSGTTGNPKGVLYSHRSTVLHSMTTAMPDTLNLSARDTILPVVPMFHVNAWGTPYSAAMVGAKLVLPGPALDGASLSKLIASEGVSIALGVPVVWQGLLAAQAGNGSKSQSLTRVVVGGSACPASMIREFNDIYGVEVIHAWGMTELSPFGTANTPLAHHVDLSPDEKLSLRKSQGRPPYGVELKIVNDEGIRLPEDGRSKGNLMARGHWVIKDYFHSDPGSTLSDGWFSTGDVATIDSDGFMTICDRAKDIIKSGGEWISTVELESIAIAHPHIVDAAVIAARHEKWDERPLLIAVKSPNSELTSGEVCNYFADKVARWQIPDAAIFVEELPRNGTGKILKNRLREKYGDILLRSSSSVCE</sequence>
<proteinExistence type="evidence at protein level"/>
<feature type="chain" id="PRO_0000193142" description="Medium-chain-fatty-acid--CoA ligase">
    <location>
        <begin position="1"/>
        <end position="546"/>
    </location>
</feature>
<feature type="binding site" evidence="1">
    <location>
        <position position="185"/>
    </location>
    <ligand>
        <name>Mg(2+)</name>
        <dbReference type="ChEBI" id="CHEBI:18420"/>
    </ligand>
</feature>
<feature type="binding site" evidence="1">
    <location>
        <position position="235"/>
    </location>
    <ligand>
        <name>ATP</name>
        <dbReference type="ChEBI" id="CHEBI:30616"/>
    </ligand>
</feature>
<feature type="binding site" evidence="1">
    <location>
        <position position="329"/>
    </location>
    <ligand>
        <name>ATP</name>
        <dbReference type="ChEBI" id="CHEBI:30616"/>
    </ligand>
</feature>
<feature type="binding site" evidence="1">
    <location>
        <position position="330"/>
    </location>
    <ligand>
        <name>Mg(2+)</name>
        <dbReference type="ChEBI" id="CHEBI:18420"/>
    </ligand>
</feature>
<feature type="binding site" evidence="1">
    <location>
        <position position="417"/>
    </location>
    <ligand>
        <name>ATP</name>
        <dbReference type="ChEBI" id="CHEBI:30616"/>
    </ligand>
</feature>
<feature type="binding site" evidence="1">
    <location>
        <position position="434"/>
    </location>
    <ligand>
        <name>ATP</name>
        <dbReference type="ChEBI" id="CHEBI:30616"/>
    </ligand>
</feature>
<feature type="binding site" evidence="1">
    <location>
        <position position="438"/>
    </location>
    <ligand>
        <name>ATP</name>
        <dbReference type="ChEBI" id="CHEBI:30616"/>
    </ligand>
</feature>
<feature type="binding site" evidence="1">
    <location>
        <position position="443"/>
    </location>
    <ligand>
        <name>ATP</name>
        <dbReference type="ChEBI" id="CHEBI:30616"/>
    </ligand>
</feature>
<accession>Q00594</accession>
<gene>
    <name evidence="3" type="primary">alkK</name>
</gene>
<dbReference type="EC" id="6.2.1.2" evidence="2"/>
<dbReference type="EMBL" id="AJ245436">
    <property type="protein sequence ID" value="CAB54055.1"/>
    <property type="molecule type" value="Genomic_DNA"/>
</dbReference>
<dbReference type="PIR" id="S27995">
    <property type="entry name" value="S27995"/>
</dbReference>
<dbReference type="SMR" id="Q00594"/>
<dbReference type="BioCyc" id="MetaCyc:MONOMER-1083"/>
<dbReference type="UniPathway" id="UPA00199"/>
<dbReference type="GO" id="GO:0005737">
    <property type="term" value="C:cytoplasm"/>
    <property type="evidence" value="ECO:0007669"/>
    <property type="project" value="UniProtKB-SubCell"/>
</dbReference>
<dbReference type="GO" id="GO:0005524">
    <property type="term" value="F:ATP binding"/>
    <property type="evidence" value="ECO:0007669"/>
    <property type="project" value="UniProtKB-KW"/>
</dbReference>
<dbReference type="GO" id="GO:0031956">
    <property type="term" value="F:medium-chain fatty acid-CoA ligase activity"/>
    <property type="evidence" value="ECO:0007669"/>
    <property type="project" value="RHEA"/>
</dbReference>
<dbReference type="GO" id="GO:0046872">
    <property type="term" value="F:metal ion binding"/>
    <property type="evidence" value="ECO:0007669"/>
    <property type="project" value="UniProtKB-KW"/>
</dbReference>
<dbReference type="GO" id="GO:0006631">
    <property type="term" value="P:fatty acid metabolic process"/>
    <property type="evidence" value="ECO:0007669"/>
    <property type="project" value="UniProtKB-UniPathway"/>
</dbReference>
<dbReference type="CDD" id="cd12119">
    <property type="entry name" value="ttLC_FACS_AlkK_like"/>
    <property type="match status" value="1"/>
</dbReference>
<dbReference type="FunFam" id="3.30.300.30:FF:000008">
    <property type="entry name" value="2,3-dihydroxybenzoate-AMP ligase"/>
    <property type="match status" value="1"/>
</dbReference>
<dbReference type="Gene3D" id="3.30.300.30">
    <property type="match status" value="1"/>
</dbReference>
<dbReference type="Gene3D" id="3.40.50.12780">
    <property type="entry name" value="N-terminal domain of ligase-like"/>
    <property type="match status" value="1"/>
</dbReference>
<dbReference type="InterPro" id="IPR025110">
    <property type="entry name" value="AMP-bd_C"/>
</dbReference>
<dbReference type="InterPro" id="IPR045851">
    <property type="entry name" value="AMP-bd_C_sf"/>
</dbReference>
<dbReference type="InterPro" id="IPR020845">
    <property type="entry name" value="AMP-binding_CS"/>
</dbReference>
<dbReference type="InterPro" id="IPR000873">
    <property type="entry name" value="AMP-dep_synth/lig_dom"/>
</dbReference>
<dbReference type="InterPro" id="IPR042099">
    <property type="entry name" value="ANL_N_sf"/>
</dbReference>
<dbReference type="NCBIfam" id="NF004837">
    <property type="entry name" value="PRK06187.1"/>
    <property type="match status" value="1"/>
</dbReference>
<dbReference type="PANTHER" id="PTHR43859">
    <property type="entry name" value="ACYL-ACTIVATING ENZYME"/>
    <property type="match status" value="1"/>
</dbReference>
<dbReference type="PANTHER" id="PTHR43859:SF4">
    <property type="entry name" value="BUTANOATE--COA LIGASE AAE1-RELATED"/>
    <property type="match status" value="1"/>
</dbReference>
<dbReference type="Pfam" id="PF00501">
    <property type="entry name" value="AMP-binding"/>
    <property type="match status" value="1"/>
</dbReference>
<dbReference type="Pfam" id="PF13193">
    <property type="entry name" value="AMP-binding_C"/>
    <property type="match status" value="1"/>
</dbReference>
<dbReference type="SUPFAM" id="SSF56801">
    <property type="entry name" value="Acetyl-CoA synthetase-like"/>
    <property type="match status" value="1"/>
</dbReference>
<dbReference type="PROSITE" id="PS00455">
    <property type="entry name" value="AMP_BINDING"/>
    <property type="match status" value="1"/>
</dbReference>
<geneLocation type="plasmid">
    <name>OCT</name>
</geneLocation>